<evidence type="ECO:0000250" key="1">
    <source>
        <dbReference type="UniProtKB" id="P59041"/>
    </source>
</evidence>
<evidence type="ECO:0000255" key="2"/>
<evidence type="ECO:0000255" key="3">
    <source>
        <dbReference type="PROSITE-ProRule" id="PRU00286"/>
    </source>
</evidence>
<evidence type="ECO:0000256" key="4">
    <source>
        <dbReference type="SAM" id="MobiDB-lite"/>
    </source>
</evidence>
<evidence type="ECO:0000269" key="5">
    <source>
    </source>
</evidence>
<evidence type="ECO:0000269" key="6">
    <source>
    </source>
</evidence>
<evidence type="ECO:0000269" key="7">
    <source>
    </source>
</evidence>
<evidence type="ECO:0000269" key="8">
    <source>
    </source>
</evidence>
<evidence type="ECO:0000303" key="9">
    <source>
    </source>
</evidence>
<evidence type="ECO:0000303" key="10">
    <source>
    </source>
</evidence>
<evidence type="ECO:0000312" key="11">
    <source>
        <dbReference type="HGNC" id="HGNC:16410"/>
    </source>
</evidence>
<evidence type="ECO:0007829" key="12">
    <source>
        <dbReference type="PDB" id="2YUA"/>
    </source>
</evidence>
<feature type="transit peptide" description="Mitochondrion" evidence="2">
    <location>
        <begin position="1"/>
        <end position="38"/>
    </location>
</feature>
<feature type="chain" id="PRO_0000071137" description="DnaJ homolog subfamily C member 30, mitochondrial" evidence="2">
    <location>
        <begin position="39"/>
        <end position="226"/>
    </location>
</feature>
<feature type="transmembrane region" description="Helical" evidence="2">
    <location>
        <begin position="208"/>
        <end position="225"/>
    </location>
</feature>
<feature type="domain" description="J" evidence="3">
    <location>
        <begin position="49"/>
        <end position="114"/>
    </location>
</feature>
<feature type="region of interest" description="Disordered" evidence="4">
    <location>
        <begin position="116"/>
        <end position="157"/>
    </location>
</feature>
<feature type="compositionally biased region" description="Pro residues" evidence="4">
    <location>
        <begin position="130"/>
        <end position="144"/>
    </location>
</feature>
<feature type="sequence variant" id="VAR_024433" description="In dbSNP:rs1128349." evidence="6">
    <original>G</original>
    <variation>R</variation>
    <location>
        <position position="34"/>
    </location>
</feature>
<feature type="sequence variant" id="VAR_085951" description="In LHONAR1; results in reduced turnover of N-module subunits of the respiratory chain complex I and reduced complex I activity in homozygous patient-derived cells; dbSNP:rs61732167." evidence="8">
    <original>Y</original>
    <variation>C</variation>
    <location>
        <position position="51"/>
    </location>
</feature>
<feature type="sequence variant" id="VAR_085952" description="In LHONAR1; results in reduced turnover of N-module subunits of the respiratory chain complex I and reduced complex I activity in homozygous patient-derived cells; dbSNP:rs2116654445." evidence="8">
    <original>P</original>
    <variation>S</variation>
    <location>
        <position position="78"/>
    </location>
</feature>
<feature type="sequence variant" id="VAR_085953" description="In LHONAR1; results in reduced turnover of N-module subunits of the respiratory chain complex I and reduced complex I activity in homozygous patient-derived cells; dbSNP:rs2116654140." evidence="8">
    <original>L</original>
    <variation>Q</variation>
    <location>
        <position position="101"/>
    </location>
</feature>
<feature type="sequence variant" id="VAR_048915" description="In dbSNP:rs13244259.">
    <original>F</original>
    <variation>L</variation>
    <location>
        <position position="167"/>
    </location>
</feature>
<feature type="helix" evidence="12">
    <location>
        <begin position="49"/>
        <end position="54"/>
    </location>
</feature>
<feature type="helix" evidence="12">
    <location>
        <begin position="62"/>
        <end position="75"/>
    </location>
</feature>
<feature type="turn" evidence="12">
    <location>
        <begin position="78"/>
        <end position="80"/>
    </location>
</feature>
<feature type="helix" evidence="12">
    <location>
        <begin position="86"/>
        <end position="100"/>
    </location>
</feature>
<feature type="helix" evidence="12">
    <location>
        <begin position="104"/>
        <end position="111"/>
    </location>
</feature>
<feature type="helix" evidence="12">
    <location>
        <begin position="117"/>
        <end position="121"/>
    </location>
</feature>
<proteinExistence type="evidence at protein level"/>
<protein>
    <recommendedName>
        <fullName evidence="10">DnaJ homolog subfamily C member 30, mitochondrial</fullName>
    </recommendedName>
    <alternativeName>
        <fullName evidence="9">Williams-Beuren syndrome chromosomal region 18 protein</fullName>
    </alternativeName>
</protein>
<name>DJC30_HUMAN</name>
<reference key="1">
    <citation type="journal article" date="2002" name="Hum. Genet.">
        <title>Identification of additional transcripts in the Williams-Beuren syndrome critical region.</title>
        <authorList>
            <person name="Merla G."/>
            <person name="Ucla C."/>
            <person name="Guipponi M."/>
            <person name="Reymond A."/>
        </authorList>
    </citation>
    <scope>NUCLEOTIDE SEQUENCE [MRNA]</scope>
    <scope>TISSUE SPECIFICITY</scope>
    <scope>ROLE IN WILLIAMS-BEUREN SYNDROME</scope>
</reference>
<reference key="2">
    <citation type="journal article" date="2004" name="Nat. Genet.">
        <title>Complete sequencing and characterization of 21,243 full-length human cDNAs.</title>
        <authorList>
            <person name="Ota T."/>
            <person name="Suzuki Y."/>
            <person name="Nishikawa T."/>
            <person name="Otsuki T."/>
            <person name="Sugiyama T."/>
            <person name="Irie R."/>
            <person name="Wakamatsu A."/>
            <person name="Hayashi K."/>
            <person name="Sato H."/>
            <person name="Nagai K."/>
            <person name="Kimura K."/>
            <person name="Makita H."/>
            <person name="Sekine M."/>
            <person name="Obayashi M."/>
            <person name="Nishi T."/>
            <person name="Shibahara T."/>
            <person name="Tanaka T."/>
            <person name="Ishii S."/>
            <person name="Yamamoto J."/>
            <person name="Saito K."/>
            <person name="Kawai Y."/>
            <person name="Isono Y."/>
            <person name="Nakamura Y."/>
            <person name="Nagahari K."/>
            <person name="Murakami K."/>
            <person name="Yasuda T."/>
            <person name="Iwayanagi T."/>
            <person name="Wagatsuma M."/>
            <person name="Shiratori A."/>
            <person name="Sudo H."/>
            <person name="Hosoiri T."/>
            <person name="Kaku Y."/>
            <person name="Kodaira H."/>
            <person name="Kondo H."/>
            <person name="Sugawara M."/>
            <person name="Takahashi M."/>
            <person name="Kanda K."/>
            <person name="Yokoi T."/>
            <person name="Furuya T."/>
            <person name="Kikkawa E."/>
            <person name="Omura Y."/>
            <person name="Abe K."/>
            <person name="Kamihara K."/>
            <person name="Katsuta N."/>
            <person name="Sato K."/>
            <person name="Tanikawa M."/>
            <person name="Yamazaki M."/>
            <person name="Ninomiya K."/>
            <person name="Ishibashi T."/>
            <person name="Yamashita H."/>
            <person name="Murakawa K."/>
            <person name="Fujimori K."/>
            <person name="Tanai H."/>
            <person name="Kimata M."/>
            <person name="Watanabe M."/>
            <person name="Hiraoka S."/>
            <person name="Chiba Y."/>
            <person name="Ishida S."/>
            <person name="Ono Y."/>
            <person name="Takiguchi S."/>
            <person name="Watanabe S."/>
            <person name="Yosida M."/>
            <person name="Hotuta T."/>
            <person name="Kusano J."/>
            <person name="Kanehori K."/>
            <person name="Takahashi-Fujii A."/>
            <person name="Hara H."/>
            <person name="Tanase T.-O."/>
            <person name="Nomura Y."/>
            <person name="Togiya S."/>
            <person name="Komai F."/>
            <person name="Hara R."/>
            <person name="Takeuchi K."/>
            <person name="Arita M."/>
            <person name="Imose N."/>
            <person name="Musashino K."/>
            <person name="Yuuki H."/>
            <person name="Oshima A."/>
            <person name="Sasaki N."/>
            <person name="Aotsuka S."/>
            <person name="Yoshikawa Y."/>
            <person name="Matsunawa H."/>
            <person name="Ichihara T."/>
            <person name="Shiohata N."/>
            <person name="Sano S."/>
            <person name="Moriya S."/>
            <person name="Momiyama H."/>
            <person name="Satoh N."/>
            <person name="Takami S."/>
            <person name="Terashima Y."/>
            <person name="Suzuki O."/>
            <person name="Nakagawa S."/>
            <person name="Senoh A."/>
            <person name="Mizoguchi H."/>
            <person name="Goto Y."/>
            <person name="Shimizu F."/>
            <person name="Wakebe H."/>
            <person name="Hishigaki H."/>
            <person name="Watanabe T."/>
            <person name="Sugiyama A."/>
            <person name="Takemoto M."/>
            <person name="Kawakami B."/>
            <person name="Yamazaki M."/>
            <person name="Watanabe K."/>
            <person name="Kumagai A."/>
            <person name="Itakura S."/>
            <person name="Fukuzumi Y."/>
            <person name="Fujimori Y."/>
            <person name="Komiyama M."/>
            <person name="Tashiro H."/>
            <person name="Tanigami A."/>
            <person name="Fujiwara T."/>
            <person name="Ono T."/>
            <person name="Yamada K."/>
            <person name="Fujii Y."/>
            <person name="Ozaki K."/>
            <person name="Hirao M."/>
            <person name="Ohmori Y."/>
            <person name="Kawabata A."/>
            <person name="Hikiji T."/>
            <person name="Kobatake N."/>
            <person name="Inagaki H."/>
            <person name="Ikema Y."/>
            <person name="Okamoto S."/>
            <person name="Okitani R."/>
            <person name="Kawakami T."/>
            <person name="Noguchi S."/>
            <person name="Itoh T."/>
            <person name="Shigeta K."/>
            <person name="Senba T."/>
            <person name="Matsumura K."/>
            <person name="Nakajima Y."/>
            <person name="Mizuno T."/>
            <person name="Morinaga M."/>
            <person name="Sasaki M."/>
            <person name="Togashi T."/>
            <person name="Oyama M."/>
            <person name="Hata H."/>
            <person name="Watanabe M."/>
            <person name="Komatsu T."/>
            <person name="Mizushima-Sugano J."/>
            <person name="Satoh T."/>
            <person name="Shirai Y."/>
            <person name="Takahashi Y."/>
            <person name="Nakagawa K."/>
            <person name="Okumura K."/>
            <person name="Nagase T."/>
            <person name="Nomura N."/>
            <person name="Kikuchi H."/>
            <person name="Masuho Y."/>
            <person name="Yamashita R."/>
            <person name="Nakai K."/>
            <person name="Yada T."/>
            <person name="Nakamura Y."/>
            <person name="Ohara O."/>
            <person name="Isogai T."/>
            <person name="Sugano S."/>
        </authorList>
    </citation>
    <scope>NUCLEOTIDE SEQUENCE [LARGE SCALE MRNA]</scope>
    <source>
        <tissue>Testis</tissue>
    </source>
</reference>
<reference key="3">
    <citation type="journal article" date="2003" name="Nature">
        <title>The DNA sequence of human chromosome 7.</title>
        <authorList>
            <person name="Hillier L.W."/>
            <person name="Fulton R.S."/>
            <person name="Fulton L.A."/>
            <person name="Graves T.A."/>
            <person name="Pepin K.H."/>
            <person name="Wagner-McPherson C."/>
            <person name="Layman D."/>
            <person name="Maas J."/>
            <person name="Jaeger S."/>
            <person name="Walker R."/>
            <person name="Wylie K."/>
            <person name="Sekhon M."/>
            <person name="Becker M.C."/>
            <person name="O'Laughlin M.D."/>
            <person name="Schaller M.E."/>
            <person name="Fewell G.A."/>
            <person name="Delehaunty K.D."/>
            <person name="Miner T.L."/>
            <person name="Nash W.E."/>
            <person name="Cordes M."/>
            <person name="Du H."/>
            <person name="Sun H."/>
            <person name="Edwards J."/>
            <person name="Bradshaw-Cordum H."/>
            <person name="Ali J."/>
            <person name="Andrews S."/>
            <person name="Isak A."/>
            <person name="Vanbrunt A."/>
            <person name="Nguyen C."/>
            <person name="Du F."/>
            <person name="Lamar B."/>
            <person name="Courtney L."/>
            <person name="Kalicki J."/>
            <person name="Ozersky P."/>
            <person name="Bielicki L."/>
            <person name="Scott K."/>
            <person name="Holmes A."/>
            <person name="Harkins R."/>
            <person name="Harris A."/>
            <person name="Strong C.M."/>
            <person name="Hou S."/>
            <person name="Tomlinson C."/>
            <person name="Dauphin-Kohlberg S."/>
            <person name="Kozlowicz-Reilly A."/>
            <person name="Leonard S."/>
            <person name="Rohlfing T."/>
            <person name="Rock S.M."/>
            <person name="Tin-Wollam A.-M."/>
            <person name="Abbott A."/>
            <person name="Minx P."/>
            <person name="Maupin R."/>
            <person name="Strowmatt C."/>
            <person name="Latreille P."/>
            <person name="Miller N."/>
            <person name="Johnson D."/>
            <person name="Murray J."/>
            <person name="Woessner J.P."/>
            <person name="Wendl M.C."/>
            <person name="Yang S.-P."/>
            <person name="Schultz B.R."/>
            <person name="Wallis J.W."/>
            <person name="Spieth J."/>
            <person name="Bieri T.A."/>
            <person name="Nelson J.O."/>
            <person name="Berkowicz N."/>
            <person name="Wohldmann P.E."/>
            <person name="Cook L.L."/>
            <person name="Hickenbotham M.T."/>
            <person name="Eldred J."/>
            <person name="Williams D."/>
            <person name="Bedell J.A."/>
            <person name="Mardis E.R."/>
            <person name="Clifton S.W."/>
            <person name="Chissoe S.L."/>
            <person name="Marra M.A."/>
            <person name="Raymond C."/>
            <person name="Haugen E."/>
            <person name="Gillett W."/>
            <person name="Zhou Y."/>
            <person name="James R."/>
            <person name="Phelps K."/>
            <person name="Iadanoto S."/>
            <person name="Bubb K."/>
            <person name="Simms E."/>
            <person name="Levy R."/>
            <person name="Clendenning J."/>
            <person name="Kaul R."/>
            <person name="Kent W.J."/>
            <person name="Furey T.S."/>
            <person name="Baertsch R.A."/>
            <person name="Brent M.R."/>
            <person name="Keibler E."/>
            <person name="Flicek P."/>
            <person name="Bork P."/>
            <person name="Suyama M."/>
            <person name="Bailey J.A."/>
            <person name="Portnoy M.E."/>
            <person name="Torrents D."/>
            <person name="Chinwalla A.T."/>
            <person name="Gish W.R."/>
            <person name="Eddy S.R."/>
            <person name="McPherson J.D."/>
            <person name="Olson M.V."/>
            <person name="Eichler E.E."/>
            <person name="Green E.D."/>
            <person name="Waterston R.H."/>
            <person name="Wilson R.K."/>
        </authorList>
    </citation>
    <scope>NUCLEOTIDE SEQUENCE [LARGE SCALE GENOMIC DNA]</scope>
</reference>
<reference key="4">
    <citation type="journal article" date="2004" name="Genome Res.">
        <title>The status, quality, and expansion of the NIH full-length cDNA project: the Mammalian Gene Collection (MGC).</title>
        <authorList>
            <consortium name="The MGC Project Team"/>
        </authorList>
    </citation>
    <scope>NUCLEOTIDE SEQUENCE [LARGE SCALE MRNA]</scope>
    <scope>VARIANT ARG-34</scope>
    <source>
        <tissue>Lung</tissue>
    </source>
</reference>
<reference key="5">
    <citation type="journal article" date="2018" name="Cell">
        <title>The 7q11.23 protein DNAJC30 interacts with ATP synthase and links mitochondria to brain development.</title>
        <authorList>
            <person name="Tebbenkamp A.T.N."/>
            <person name="Varela L."/>
            <person name="Choi J."/>
            <person name="Paredes M.I."/>
            <person name="Giani A.M."/>
            <person name="Song J.E."/>
            <person name="Sestan-Pesa M."/>
            <person name="Franjic D."/>
            <person name="Sousa A.M.M."/>
            <person name="Liu Z.W."/>
            <person name="Li M."/>
            <person name="Bichsel C."/>
            <person name="Koch M."/>
            <person name="Szigeti-Buck K."/>
            <person name="Liu F."/>
            <person name="Li Z."/>
            <person name="Kawasawa Y.I."/>
            <person name="Paspalas C.D."/>
            <person name="Mineur Y.S."/>
            <person name="Prontera P."/>
            <person name="Merla G."/>
            <person name="Picciotto M.R."/>
            <person name="Arnsten A.F.T."/>
            <person name="Horvath T.L."/>
            <person name="Sestan N."/>
        </authorList>
    </citation>
    <scope>INTERACTION WITH MT-ATP6 AND ATP5MC2</scope>
    <scope>ASSOCIATION WITH THE ATP SYNTHASE COMPLEX</scope>
    <scope>SUBCELLULAR LOCATION</scope>
    <scope>TISSUE SPECIFICITY</scope>
    <scope>INVOLVEMENT IN WBS</scope>
</reference>
<reference key="6">
    <citation type="submission" date="2007-10" db="PDB data bank">
        <title>Solution structure of the DNAJ domain from human Williams-Beuren syndrome chromosome region 18 protein.</title>
        <authorList>
            <consortium name="RIKEN structural genomics initiative (RSGI)"/>
        </authorList>
    </citation>
    <scope>STRUCTURE BY NMR OF 32-128</scope>
</reference>
<reference key="7">
    <citation type="journal article" date="2021" name="J. Clin. Invest.">
        <title>Impaired complex I repair causes recessive Leber's hereditary optic neuropathy.</title>
        <authorList>
            <person name="Stenton S.L."/>
            <person name="Sheremet N.L."/>
            <person name="Catarino C.B."/>
            <person name="Andreeva N.A."/>
            <person name="Assouline Z."/>
            <person name="Barboni P."/>
            <person name="Barel O."/>
            <person name="Berutti R."/>
            <person name="Bychkov I."/>
            <person name="Caporali L."/>
            <person name="Capristo M."/>
            <person name="Carbonelli M."/>
            <person name="Cascavilla M.L."/>
            <person name="Charbel Issa P."/>
            <person name="Freisinger P."/>
            <person name="Gerber S."/>
            <person name="Ghezzi D."/>
            <person name="Graf E."/>
            <person name="Heidler J."/>
            <person name="Hempel M."/>
            <person name="Heon E."/>
            <person name="Itkis Y.S."/>
            <person name="Javasky E."/>
            <person name="Kaplan J."/>
            <person name="Kopajtich R."/>
            <person name="Kornblum C."/>
            <person name="Kovacs-Nagy R."/>
            <person name="Krylova T.D."/>
            <person name="Kunz W.S."/>
            <person name="La Morgia C."/>
            <person name="Lamperti C."/>
            <person name="Ludwig C."/>
            <person name="Malacarne P.F."/>
            <person name="Maresca A."/>
            <person name="Mayr J.A."/>
            <person name="Meisterknecht J."/>
            <person name="Nevinitsyna T.A."/>
            <person name="Palombo F."/>
            <person name="Pode-Shakked B."/>
            <person name="Shmelkova M.S."/>
            <person name="Strom T.M."/>
            <person name="Tagliavini F."/>
            <person name="Tzadok M."/>
            <person name="van der Ven A.T."/>
            <person name="Vignal-Clermont C."/>
            <person name="Wagner M."/>
            <person name="Zakharova E.Y."/>
            <person name="Zhorzholadze N.V."/>
            <person name="Rozet J.M."/>
            <person name="Carelli V."/>
            <person name="Tsygankova P.G."/>
            <person name="Klopstock T."/>
            <person name="Wittig I."/>
            <person name="Prokisch H."/>
        </authorList>
    </citation>
    <scope>VARIANTS LHONAR1 CYS-51; SER-78 AND GLN-101</scope>
    <scope>INVOLVEMENT IN LHONAR1</scope>
    <scope>CHARACTERIZATION OF VARIANTS LHONAR1 CYS-51; SER-78 AND GLN-101</scope>
    <scope>FUNCTION</scope>
</reference>
<sequence>MAAMRWRWWQRLLPWRLLQARGFPQNSAPSLGLGARTYSQGDCSYSRTALYDLLGVPSTATQAQIKAAYYRQCFLYHPDRNSGSAEAAERFTRISQAYVVLGSATLRRKYDRGLLSDEDLRGPGVRPSRTPAPDPGSPRTPPPTSRTHDGSRASPGANRTMFNFDAFYQAHYGEQLERERRLRARREALRKRQEYRSMKGLRWEDTRDTAAIFLIFSIFIIIGFYI</sequence>
<dbReference type="EMBL" id="AF412025">
    <property type="protein sequence ID" value="AAM62307.1"/>
    <property type="molecule type" value="mRNA"/>
</dbReference>
<dbReference type="EMBL" id="AK058113">
    <property type="protein sequence ID" value="BAB71671.1"/>
    <property type="molecule type" value="mRNA"/>
</dbReference>
<dbReference type="EMBL" id="AC073846">
    <property type="protein sequence ID" value="AAS07471.1"/>
    <property type="molecule type" value="Genomic_DNA"/>
</dbReference>
<dbReference type="EMBL" id="BC005056">
    <property type="protein sequence ID" value="AAH05056.1"/>
    <property type="molecule type" value="mRNA"/>
</dbReference>
<dbReference type="CCDS" id="CCDS5556.1"/>
<dbReference type="RefSeq" id="NP_115693.2">
    <property type="nucleotide sequence ID" value="NM_032317.2"/>
</dbReference>
<dbReference type="PDB" id="2YUA">
    <property type="method" value="NMR"/>
    <property type="chains" value="A=39-124"/>
</dbReference>
<dbReference type="PDBsum" id="2YUA"/>
<dbReference type="BMRB" id="Q96LL9"/>
<dbReference type="SMR" id="Q96LL9"/>
<dbReference type="BioGRID" id="124004">
    <property type="interactions" value="219"/>
</dbReference>
<dbReference type="FunCoup" id="Q96LL9">
    <property type="interactions" value="573"/>
</dbReference>
<dbReference type="IntAct" id="Q96LL9">
    <property type="interactions" value="91"/>
</dbReference>
<dbReference type="MINT" id="Q96LL9"/>
<dbReference type="STRING" id="9606.ENSP00000378605"/>
<dbReference type="iPTMnet" id="Q96LL9"/>
<dbReference type="PhosphoSitePlus" id="Q96LL9"/>
<dbReference type="SwissPalm" id="Q96LL9"/>
<dbReference type="BioMuta" id="DNAJC30"/>
<dbReference type="DMDM" id="24212614"/>
<dbReference type="jPOST" id="Q96LL9"/>
<dbReference type="MassIVE" id="Q96LL9"/>
<dbReference type="PaxDb" id="9606-ENSP00000378605"/>
<dbReference type="PeptideAtlas" id="Q96LL9"/>
<dbReference type="ProteomicsDB" id="77223"/>
<dbReference type="Pumba" id="Q96LL9"/>
<dbReference type="Antibodypedia" id="2642">
    <property type="antibodies" value="87 antibodies from 14 providers"/>
</dbReference>
<dbReference type="DNASU" id="84277"/>
<dbReference type="Ensembl" id="ENST00000395176.3">
    <property type="protein sequence ID" value="ENSP00000378605.1"/>
    <property type="gene ID" value="ENSG00000176410.8"/>
</dbReference>
<dbReference type="GeneID" id="84277"/>
<dbReference type="KEGG" id="hsa:84277"/>
<dbReference type="MANE-Select" id="ENST00000395176.3">
    <property type="protein sequence ID" value="ENSP00000378605.1"/>
    <property type="RefSeq nucleotide sequence ID" value="NM_032317.3"/>
    <property type="RefSeq protein sequence ID" value="NP_115693.2"/>
</dbReference>
<dbReference type="UCSC" id="uc003tys.2">
    <property type="organism name" value="human"/>
</dbReference>
<dbReference type="AGR" id="HGNC:16410"/>
<dbReference type="CTD" id="84277"/>
<dbReference type="DisGeNET" id="84277"/>
<dbReference type="GeneCards" id="DNAJC30"/>
<dbReference type="HGNC" id="HGNC:16410">
    <property type="gene designation" value="DNAJC30"/>
</dbReference>
<dbReference type="HPA" id="ENSG00000176410">
    <property type="expression patterns" value="Low tissue specificity"/>
</dbReference>
<dbReference type="MalaCards" id="DNAJC30"/>
<dbReference type="MIM" id="618202">
    <property type="type" value="gene"/>
</dbReference>
<dbReference type="MIM" id="619382">
    <property type="type" value="phenotype"/>
</dbReference>
<dbReference type="neXtProt" id="NX_Q96LL9"/>
<dbReference type="OpenTargets" id="ENSG00000176410"/>
<dbReference type="Orphanet" id="104">
    <property type="disease" value="Leber hereditary optic neuropathy"/>
</dbReference>
<dbReference type="Orphanet" id="904">
    <property type="disease" value="Williams syndrome"/>
</dbReference>
<dbReference type="PharmGKB" id="PA162383931"/>
<dbReference type="VEuPathDB" id="HostDB:ENSG00000176410"/>
<dbReference type="eggNOG" id="KOG0691">
    <property type="taxonomic scope" value="Eukaryota"/>
</dbReference>
<dbReference type="GeneTree" id="ENSGT00510000048685"/>
<dbReference type="HOGENOM" id="CLU_104327_2_0_1"/>
<dbReference type="InParanoid" id="Q96LL9"/>
<dbReference type="OMA" id="ANRTMFD"/>
<dbReference type="OrthoDB" id="376357at2759"/>
<dbReference type="PAN-GO" id="Q96LL9">
    <property type="GO annotations" value="0 GO annotations based on evolutionary models"/>
</dbReference>
<dbReference type="PhylomeDB" id="Q96LL9"/>
<dbReference type="TreeFam" id="TF332749"/>
<dbReference type="PathwayCommons" id="Q96LL9"/>
<dbReference type="SignaLink" id="Q96LL9"/>
<dbReference type="BioGRID-ORCS" id="84277">
    <property type="hits" value="14 hits in 1155 CRISPR screens"/>
</dbReference>
<dbReference type="ChiTaRS" id="DNAJC30">
    <property type="organism name" value="human"/>
</dbReference>
<dbReference type="EvolutionaryTrace" id="Q96LL9"/>
<dbReference type="GenomeRNAi" id="84277"/>
<dbReference type="Pharos" id="Q96LL9">
    <property type="development level" value="Tbio"/>
</dbReference>
<dbReference type="PRO" id="PR:Q96LL9"/>
<dbReference type="Proteomes" id="UP000005640">
    <property type="component" value="Chromosome 7"/>
</dbReference>
<dbReference type="RNAct" id="Q96LL9">
    <property type="molecule type" value="protein"/>
</dbReference>
<dbReference type="Bgee" id="ENSG00000176410">
    <property type="expression patterns" value="Expressed in tibialis anterior and 192 other cell types or tissues"/>
</dbReference>
<dbReference type="GO" id="GO:0005743">
    <property type="term" value="C:mitochondrial inner membrane"/>
    <property type="evidence" value="ECO:0000314"/>
    <property type="project" value="UniProtKB"/>
</dbReference>
<dbReference type="GO" id="GO:0005739">
    <property type="term" value="C:mitochondrion"/>
    <property type="evidence" value="ECO:0006056"/>
    <property type="project" value="FlyBase"/>
</dbReference>
<dbReference type="GO" id="GO:0006754">
    <property type="term" value="P:ATP biosynthetic process"/>
    <property type="evidence" value="ECO:0007669"/>
    <property type="project" value="UniProtKB-KW"/>
</dbReference>
<dbReference type="GO" id="GO:0007420">
    <property type="term" value="P:brain development"/>
    <property type="evidence" value="ECO:0000250"/>
    <property type="project" value="UniProtKB"/>
</dbReference>
<dbReference type="GO" id="GO:1905706">
    <property type="term" value="P:regulation of mitochondrial ATP synthesis coupled proton transport"/>
    <property type="evidence" value="ECO:0000250"/>
    <property type="project" value="UniProtKB"/>
</dbReference>
<dbReference type="CDD" id="cd06257">
    <property type="entry name" value="DnaJ"/>
    <property type="match status" value="1"/>
</dbReference>
<dbReference type="FunFam" id="1.10.287.110:FF:000060">
    <property type="entry name" value="DnaJ (Hsp40) homolog, subfamily C, member 30"/>
    <property type="match status" value="1"/>
</dbReference>
<dbReference type="Gene3D" id="1.10.287.110">
    <property type="entry name" value="DnaJ domain"/>
    <property type="match status" value="1"/>
</dbReference>
<dbReference type="InterPro" id="IPR001623">
    <property type="entry name" value="DnaJ_domain"/>
</dbReference>
<dbReference type="InterPro" id="IPR036869">
    <property type="entry name" value="J_dom_sf"/>
</dbReference>
<dbReference type="InterPro" id="IPR053025">
    <property type="entry name" value="Mito_ATP_Synthase-Asso"/>
</dbReference>
<dbReference type="PANTHER" id="PTHR44873">
    <property type="entry name" value="DNAJ HOMOLOG SUBFAMILY C MEMBER 30, MITOCHONDRIAL"/>
    <property type="match status" value="1"/>
</dbReference>
<dbReference type="PANTHER" id="PTHR44873:SF1">
    <property type="entry name" value="DNAJ HOMOLOG SUBFAMILY C MEMBER 30, MITOCHONDRIAL"/>
    <property type="match status" value="1"/>
</dbReference>
<dbReference type="Pfam" id="PF00226">
    <property type="entry name" value="DnaJ"/>
    <property type="match status" value="1"/>
</dbReference>
<dbReference type="PRINTS" id="PR00625">
    <property type="entry name" value="JDOMAIN"/>
</dbReference>
<dbReference type="SMART" id="SM00271">
    <property type="entry name" value="DnaJ"/>
    <property type="match status" value="1"/>
</dbReference>
<dbReference type="SUPFAM" id="SSF46565">
    <property type="entry name" value="Chaperone J-domain"/>
    <property type="match status" value="1"/>
</dbReference>
<dbReference type="PROSITE" id="PS50076">
    <property type="entry name" value="DNAJ_2"/>
    <property type="match status" value="1"/>
</dbReference>
<comment type="function">
    <text evidence="1 8">Mitochondrial protein enriched in neurons that acts as a regulator of mitochondrial respiration (By similarity). Associates with the ATP synthase complex and facilitates ATP synthesis (By similarity). May be a chaperone protein involved in the turnover of the subunits of mitochondrial complex I N-module. It facilitates the degradation of N-module subunits damaged by oxidative stress, and contributes to complex I functional efficiency (PubMed:33465056).</text>
</comment>
<comment type="subunit">
    <text evidence="7">Associates with the ATP synthase complex (PubMed:30318146). Interacts with MT-ATP6; interaction is direct (PubMed:30318146). Interacts with ATP5MC2; interaction is direct (PubMed:30318146).</text>
</comment>
<comment type="interaction">
    <interactant intactId="EBI-8639143">
        <id>Q96LL9</id>
    </interactant>
    <interactant intactId="EBI-13059134">
        <id>Q13520</id>
        <label>AQP6</label>
    </interactant>
    <organismsDiffer>false</organismsDiffer>
    <experiments>3</experiments>
</comment>
<comment type="interaction">
    <interactant intactId="EBI-8639143">
        <id>Q96LL9</id>
    </interactant>
    <interactant intactId="EBI-19947314">
        <id>Q8NFU1</id>
        <label>BEST2</label>
    </interactant>
    <organismsDiffer>false</organismsDiffer>
    <experiments>3</experiments>
</comment>
<comment type="interaction">
    <interactant intactId="EBI-8639143">
        <id>Q96LL9</id>
    </interactant>
    <interactant intactId="EBI-12187137">
        <id>Q9BXU9</id>
        <label>CALN1</label>
    </interactant>
    <organismsDiffer>false</organismsDiffer>
    <experiments>3</experiments>
</comment>
<comment type="interaction">
    <interactant intactId="EBI-8639143">
        <id>Q96LL9</id>
    </interactant>
    <interactant intactId="EBI-3915253">
        <id>Q15125</id>
        <label>EBP</label>
    </interactant>
    <organismsDiffer>false</organismsDiffer>
    <experiments>3</experiments>
</comment>
<comment type="interaction">
    <interactant intactId="EBI-8639143">
        <id>Q96LL9</id>
    </interactant>
    <interactant intactId="EBI-18304435">
        <id>Q5JX71</id>
        <label>FAM209A</label>
    </interactant>
    <organismsDiffer>false</organismsDiffer>
    <experiments>3</experiments>
</comment>
<comment type="interaction">
    <interactant intactId="EBI-8639143">
        <id>Q96LL9</id>
    </interactant>
    <interactant intactId="EBI-743099">
        <id>Q969F0</id>
        <label>FATE1</label>
    </interactant>
    <organismsDiffer>false</organismsDiffer>
    <experiments>3</experiments>
</comment>
<comment type="interaction">
    <interactant intactId="EBI-8639143">
        <id>Q96LL9</id>
    </interactant>
    <interactant intactId="EBI-11721746">
        <id>Q8TED1</id>
        <label>GPX8</label>
    </interactant>
    <organismsDiffer>false</organismsDiffer>
    <experiments>3</experiments>
</comment>
<comment type="interaction">
    <interactant intactId="EBI-8639143">
        <id>Q96LL9</id>
    </interactant>
    <interactant intactId="EBI-10266796">
        <id>Q8N5M9</id>
        <label>JAGN1</label>
    </interactant>
    <organismsDiffer>false</organismsDiffer>
    <experiments>3</experiments>
</comment>
<comment type="interaction">
    <interactant intactId="EBI-8639143">
        <id>Q96LL9</id>
    </interactant>
    <interactant intactId="EBI-749265">
        <id>Q8N6L0</id>
        <label>KASH5</label>
    </interactant>
    <organismsDiffer>false</organismsDiffer>
    <experiments>3</experiments>
</comment>
<comment type="interaction">
    <interactant intactId="EBI-8639143">
        <id>Q96LL9</id>
    </interactant>
    <interactant intactId="EBI-11304917">
        <id>Q8N386</id>
        <label>LRRC25</label>
    </interactant>
    <organismsDiffer>false</organismsDiffer>
    <experiments>3</experiments>
</comment>
<comment type="interaction">
    <interactant intactId="EBI-8639143">
        <id>Q96LL9</id>
    </interactant>
    <interactant intactId="EBI-373355">
        <id>Q5SR56</id>
        <label>MFSD14B</label>
    </interactant>
    <organismsDiffer>false</organismsDiffer>
    <experiments>3</experiments>
</comment>
<comment type="interaction">
    <interactant intactId="EBI-8639143">
        <id>Q96LL9</id>
    </interactant>
    <interactant intactId="EBI-11324706">
        <id>Q99735</id>
        <label>MGST2</label>
    </interactant>
    <organismsDiffer>false</organismsDiffer>
    <experiments>3</experiments>
</comment>
<comment type="interaction">
    <interactant intactId="EBI-8639143">
        <id>Q96LL9</id>
    </interactant>
    <interactant intactId="EBI-5454865">
        <id>Q6IN84</id>
        <label>MRM1</label>
    </interactant>
    <organismsDiffer>false</organismsDiffer>
    <experiments>3</experiments>
</comment>
<comment type="interaction">
    <interactant intactId="EBI-8639143">
        <id>Q96LL9</id>
    </interactant>
    <interactant intactId="EBI-949102">
        <id>Q15800</id>
        <label>MSMO1</label>
    </interactant>
    <organismsDiffer>false</organismsDiffer>
    <experiments>3</experiments>
</comment>
<comment type="interaction">
    <interactant intactId="EBI-8639143">
        <id>Q96LL9</id>
    </interactant>
    <interactant intactId="EBI-594836">
        <id>O00623</id>
        <label>PEX12</label>
    </interactant>
    <organismsDiffer>false</organismsDiffer>
    <experiments>3</experiments>
</comment>
<comment type="interaction">
    <interactant intactId="EBI-8639143">
        <id>Q96LL9</id>
    </interactant>
    <interactant intactId="EBI-7545592">
        <id>Q9H6H4</id>
        <label>REEP4</label>
    </interactant>
    <organismsDiffer>false</organismsDiffer>
    <experiments>3</experiments>
</comment>
<comment type="interaction">
    <interactant intactId="EBI-8639143">
        <id>Q96LL9</id>
    </interactant>
    <interactant intactId="EBI-12055631">
        <id>Q96K19-5</id>
        <label>RNF170</label>
    </interactant>
    <organismsDiffer>false</organismsDiffer>
    <experiments>3</experiments>
</comment>
<comment type="interaction">
    <interactant intactId="EBI-8639143">
        <id>Q96LL9</id>
    </interactant>
    <interactant intactId="EBI-17640454">
        <id>Q96PQ1</id>
        <label>SIGLEC12</label>
    </interactant>
    <organismsDiffer>false</organismsDiffer>
    <experiments>3</experiments>
</comment>
<comment type="interaction">
    <interactant intactId="EBI-8639143">
        <id>Q96LL9</id>
    </interactant>
    <interactant intactId="EBI-17456472">
        <id>Q96EP9</id>
        <label>SLC10A4</label>
    </interactant>
    <organismsDiffer>false</organismsDiffer>
    <experiments>3</experiments>
</comment>
<comment type="interaction">
    <interactant intactId="EBI-8639143">
        <id>Q96LL9</id>
    </interactant>
    <interactant intactId="EBI-17295964">
        <id>Q9NQQ7-3</id>
        <label>SLC35C2</label>
    </interactant>
    <organismsDiffer>false</organismsDiffer>
    <experiments>3</experiments>
</comment>
<comment type="interaction">
    <interactant intactId="EBI-8639143">
        <id>Q96LL9</id>
    </interactant>
    <interactant intactId="EBI-945738">
        <id>Q86UW1</id>
        <label>SLC51A</label>
    </interactant>
    <organismsDiffer>false</organismsDiffer>
    <experiments>3</experiments>
</comment>
<comment type="interaction">
    <interactant intactId="EBI-8639143">
        <id>Q96LL9</id>
    </interactant>
    <interactant intactId="EBI-18178701">
        <id>Q4KMG9</id>
        <label>TMEM52B</label>
    </interactant>
    <organismsDiffer>false</organismsDiffer>
    <experiments>3</experiments>
</comment>
<comment type="interaction">
    <interactant intactId="EBI-8639143">
        <id>Q96LL9</id>
    </interactant>
    <interactant intactId="EBI-2548832">
        <id>Q8N661</id>
        <label>TMEM86B</label>
    </interactant>
    <organismsDiffer>false</organismsDiffer>
    <experiments>3</experiments>
</comment>
<comment type="subcellular location">
    <subcellularLocation>
        <location evidence="7">Mitochondrion inner membrane</location>
        <topology evidence="2">Single-pass membrane protein</topology>
    </subcellularLocation>
</comment>
<comment type="tissue specificity">
    <text evidence="5 7">Expressed in brain, heart, kidney, liver, lung, spleen, stomach and testis (PubMed:12073013). Highly expressed in the brain (PubMed:30318146). In the neocortex, expressed in most, if not all, glutamatergic excitatory projection neurons (pyramidal) and many interneurons, with the strongest signal noticeably in large pyramidal neurons of layer 3C. Also present in pyramidal neurons of layer 3C PNs of the superior temporal cortex, as well as in pyramidal neurons (Betz cells) of the layer 5B primary motor cortex (at protein level) (PubMed:30318146).</text>
</comment>
<comment type="disease">
    <text evidence="5 7">DNAJC30 is located in the Williams-Beuren syndrome (WBS) critical region (PubMed:12073013, PubMed:30318146). WBS results from a hemizygous deletion of several genes on chromosome 7q11.23 thought to arise as a consequence of unequal crossing over between highly homologous low-copy repeat sequences flanking the deleted region (PubMed:30318146). WBS is an autosomal dominant disorder characterized by multiple clinical manifestations including neurologic features such as intellectual disability, cardiovascular, urogenital and skeletal features, and distinctive facies (PubMed:30318146). Deletion of DNAJC30 is responsible for mitochondrial dysfunction underlyining certain neurodevelopmental abnormalities observed in WBS (PubMed:30318146).</text>
</comment>
<comment type="disease" evidence="8">
    <disease id="DI-06147">
        <name>Leber-like hereditary optic neuropathy, autosomal recessive 1</name>
        <acronym>LHONAR1</acronym>
        <description>An autosomal recessive form of Leber hereditary optic neuropathy, a mitochondrial disease resulting in bilateral painless loss of central vision due to selective degeneration of the retinal ganglion cells and their axons. The disorder shows incomplete penetrance and male predominance.</description>
        <dbReference type="MIM" id="619382"/>
    </disease>
    <text>The disease is caused by variants affecting the gene represented in this entry.</text>
</comment>
<organism>
    <name type="scientific">Homo sapiens</name>
    <name type="common">Human</name>
    <dbReference type="NCBI Taxonomy" id="9606"/>
    <lineage>
        <taxon>Eukaryota</taxon>
        <taxon>Metazoa</taxon>
        <taxon>Chordata</taxon>
        <taxon>Craniata</taxon>
        <taxon>Vertebrata</taxon>
        <taxon>Euteleostomi</taxon>
        <taxon>Mammalia</taxon>
        <taxon>Eutheria</taxon>
        <taxon>Euarchontoglires</taxon>
        <taxon>Primates</taxon>
        <taxon>Haplorrhini</taxon>
        <taxon>Catarrhini</taxon>
        <taxon>Hominidae</taxon>
        <taxon>Homo</taxon>
    </lineage>
</organism>
<keyword id="KW-0002">3D-structure</keyword>
<keyword id="KW-0066">ATP synthesis</keyword>
<keyword id="KW-0143">Chaperone</keyword>
<keyword id="KW-0225">Disease variant</keyword>
<keyword id="KW-0429">Leber hereditary optic neuropathy</keyword>
<keyword id="KW-0472">Membrane</keyword>
<keyword id="KW-0496">Mitochondrion</keyword>
<keyword id="KW-0999">Mitochondrion inner membrane</keyword>
<keyword id="KW-1274">Primary mitochondrial disease</keyword>
<keyword id="KW-1267">Proteomics identification</keyword>
<keyword id="KW-1185">Reference proteome</keyword>
<keyword id="KW-0809">Transit peptide</keyword>
<keyword id="KW-0812">Transmembrane</keyword>
<keyword id="KW-1133">Transmembrane helix</keyword>
<keyword id="KW-0856">Williams-Beuren syndrome</keyword>
<accession>Q96LL9</accession>
<accession>Q9BSG8</accession>
<gene>
    <name evidence="10 11" type="primary">DNAJC30</name>
    <name evidence="9" type="synonym">WBSCR18</name>
</gene>